<sequence>MDFECGSLVTDGERVSNPTDRGFRWSAAPRGMLKPSGWRADGGVWFCDVTLDYDTIVAHGTLQDDNLVFMTRLYFGPKGGLIPDDVKSDRHVCPDCGVKVIRFTLVDDFLDEHVYHSRGGCPRIRQFLGQRVLSEYYELTQFLKGDRPYPARRKWDLSRDSAVLKAYAVYASPKDNSVQTG</sequence>
<accession>Q00148</accession>
<name>VG79_ICHVA</name>
<protein>
    <recommendedName>
        <fullName>Uncharacterized protein ORF79</fullName>
    </recommendedName>
</protein>
<reference key="1">
    <citation type="journal article" date="1992" name="Virology">
        <title>Channel catfish virus: a new type of herpesvirus.</title>
        <authorList>
            <person name="Davison A.J."/>
        </authorList>
    </citation>
    <scope>NUCLEOTIDE SEQUENCE [LARGE SCALE GENOMIC DNA]</scope>
</reference>
<keyword id="KW-1185">Reference proteome</keyword>
<gene>
    <name type="primary">ORF79</name>
</gene>
<feature type="chain" id="PRO_0000222153" description="Uncharacterized protein ORF79">
    <location>
        <begin position="1"/>
        <end position="181"/>
    </location>
</feature>
<dbReference type="EMBL" id="M75136">
    <property type="protein sequence ID" value="AAA88181.1"/>
    <property type="molecule type" value="Genomic_DNA"/>
</dbReference>
<dbReference type="PIR" id="E36794">
    <property type="entry name" value="E36794"/>
</dbReference>
<dbReference type="RefSeq" id="NP_041169.1">
    <property type="nucleotide sequence ID" value="NC_001493.2"/>
</dbReference>
<dbReference type="GeneID" id="1488434"/>
<dbReference type="KEGG" id="vg:1488434"/>
<dbReference type="Proteomes" id="UP000007643">
    <property type="component" value="Segment"/>
</dbReference>
<dbReference type="SUPFAM" id="SSF57924">
    <property type="entry name" value="Inhibitor of apoptosis (IAP) repeat"/>
    <property type="match status" value="1"/>
</dbReference>
<organism>
    <name type="scientific">Ictalurid herpesvirus 1 (strain Auburn)</name>
    <name type="common">IcHV-1</name>
    <name type="synonym">Channel catfish herpesvirus</name>
    <dbReference type="NCBI Taxonomy" id="766178"/>
    <lineage>
        <taxon>Viruses</taxon>
        <taxon>Duplodnaviria</taxon>
        <taxon>Heunggongvirae</taxon>
        <taxon>Peploviricota</taxon>
        <taxon>Herviviricetes</taxon>
        <taxon>Herpesvirales</taxon>
        <taxon>Alloherpesviridae</taxon>
        <taxon>Ictavirus</taxon>
        <taxon>Ictavirus ictaluridallo1</taxon>
        <taxon>Ictalurid herpesvirus 1</taxon>
    </lineage>
</organism>
<organismHost>
    <name type="scientific">Ictaluridae</name>
    <name type="common">bullhead catfishes</name>
    <dbReference type="NCBI Taxonomy" id="7996"/>
</organismHost>
<proteinExistence type="predicted"/>